<sequence length="148" mass="16474">MRTYSPKAGEVTHAWHVIDAEDVVLGRLATQAALLLRGKHKPTYAPHVDTGDFVVVVNAEKVALTGNKRDQAFHYRHSGYPGGLRKQSFGQVLDKHPERLLEKAIKGMLPKNKLGRAMGKKLKVYAGPEHPHQAQNPQPFEINAKVEK</sequence>
<name>RL13_SACEN</name>
<gene>
    <name evidence="1" type="primary">rplM</name>
    <name type="ordered locus">SACE_6781</name>
</gene>
<organism>
    <name type="scientific">Saccharopolyspora erythraea (strain ATCC 11635 / DSM 40517 / JCM 4748 / NBRC 13426 / NCIMB 8594 / NRRL 2338)</name>
    <dbReference type="NCBI Taxonomy" id="405948"/>
    <lineage>
        <taxon>Bacteria</taxon>
        <taxon>Bacillati</taxon>
        <taxon>Actinomycetota</taxon>
        <taxon>Actinomycetes</taxon>
        <taxon>Pseudonocardiales</taxon>
        <taxon>Pseudonocardiaceae</taxon>
        <taxon>Saccharopolyspora</taxon>
    </lineage>
</organism>
<feature type="chain" id="PRO_1000055465" description="Large ribosomal subunit protein uL13">
    <location>
        <begin position="1"/>
        <end position="148"/>
    </location>
</feature>
<feature type="region of interest" description="Disordered" evidence="2">
    <location>
        <begin position="128"/>
        <end position="148"/>
    </location>
</feature>
<reference key="1">
    <citation type="journal article" date="2007" name="Nat. Biotechnol.">
        <title>Complete genome sequence of the erythromycin-producing bacterium Saccharopolyspora erythraea NRRL23338.</title>
        <authorList>
            <person name="Oliynyk M."/>
            <person name="Samborskyy M."/>
            <person name="Lester J.B."/>
            <person name="Mironenko T."/>
            <person name="Scott N."/>
            <person name="Dickens S."/>
            <person name="Haydock S.F."/>
            <person name="Leadlay P.F."/>
        </authorList>
    </citation>
    <scope>NUCLEOTIDE SEQUENCE [LARGE SCALE GENOMIC DNA]</scope>
    <source>
        <strain>ATCC 11635 / DSM 40517 / JCM 4748 / NBRC 13426 / NCIMB 8594 / NRRL 2338</strain>
    </source>
</reference>
<comment type="function">
    <text evidence="1">This protein is one of the early assembly proteins of the 50S ribosomal subunit, although it is not seen to bind rRNA by itself. It is important during the early stages of 50S assembly.</text>
</comment>
<comment type="subunit">
    <text evidence="1">Part of the 50S ribosomal subunit.</text>
</comment>
<comment type="similarity">
    <text evidence="1">Belongs to the universal ribosomal protein uL13 family.</text>
</comment>
<evidence type="ECO:0000255" key="1">
    <source>
        <dbReference type="HAMAP-Rule" id="MF_01366"/>
    </source>
</evidence>
<evidence type="ECO:0000256" key="2">
    <source>
        <dbReference type="SAM" id="MobiDB-lite"/>
    </source>
</evidence>
<evidence type="ECO:0000305" key="3"/>
<dbReference type="EMBL" id="AM420293">
    <property type="protein sequence ID" value="CAM05946.1"/>
    <property type="molecule type" value="Genomic_DNA"/>
</dbReference>
<dbReference type="RefSeq" id="WP_009943272.1">
    <property type="nucleotide sequence ID" value="NC_009142.1"/>
</dbReference>
<dbReference type="SMR" id="A4FPH1"/>
<dbReference type="STRING" id="405948.SACE_6781"/>
<dbReference type="KEGG" id="sen:SACE_6781"/>
<dbReference type="eggNOG" id="COG0102">
    <property type="taxonomic scope" value="Bacteria"/>
</dbReference>
<dbReference type="HOGENOM" id="CLU_082184_2_2_11"/>
<dbReference type="OrthoDB" id="9801330at2"/>
<dbReference type="Proteomes" id="UP000006728">
    <property type="component" value="Chromosome"/>
</dbReference>
<dbReference type="GO" id="GO:0022625">
    <property type="term" value="C:cytosolic large ribosomal subunit"/>
    <property type="evidence" value="ECO:0007669"/>
    <property type="project" value="TreeGrafter"/>
</dbReference>
<dbReference type="GO" id="GO:0003729">
    <property type="term" value="F:mRNA binding"/>
    <property type="evidence" value="ECO:0007669"/>
    <property type="project" value="TreeGrafter"/>
</dbReference>
<dbReference type="GO" id="GO:0003735">
    <property type="term" value="F:structural constituent of ribosome"/>
    <property type="evidence" value="ECO:0007669"/>
    <property type="project" value="InterPro"/>
</dbReference>
<dbReference type="GO" id="GO:0017148">
    <property type="term" value="P:negative regulation of translation"/>
    <property type="evidence" value="ECO:0007669"/>
    <property type="project" value="TreeGrafter"/>
</dbReference>
<dbReference type="GO" id="GO:0006412">
    <property type="term" value="P:translation"/>
    <property type="evidence" value="ECO:0007669"/>
    <property type="project" value="UniProtKB-UniRule"/>
</dbReference>
<dbReference type="CDD" id="cd00392">
    <property type="entry name" value="Ribosomal_L13"/>
    <property type="match status" value="1"/>
</dbReference>
<dbReference type="FunFam" id="3.90.1180.10:FF:000001">
    <property type="entry name" value="50S ribosomal protein L13"/>
    <property type="match status" value="1"/>
</dbReference>
<dbReference type="Gene3D" id="3.90.1180.10">
    <property type="entry name" value="Ribosomal protein L13"/>
    <property type="match status" value="1"/>
</dbReference>
<dbReference type="HAMAP" id="MF_01366">
    <property type="entry name" value="Ribosomal_uL13"/>
    <property type="match status" value="1"/>
</dbReference>
<dbReference type="InterPro" id="IPR005822">
    <property type="entry name" value="Ribosomal_uL13"/>
</dbReference>
<dbReference type="InterPro" id="IPR005823">
    <property type="entry name" value="Ribosomal_uL13_bac-type"/>
</dbReference>
<dbReference type="InterPro" id="IPR023563">
    <property type="entry name" value="Ribosomal_uL13_CS"/>
</dbReference>
<dbReference type="InterPro" id="IPR036899">
    <property type="entry name" value="Ribosomal_uL13_sf"/>
</dbReference>
<dbReference type="NCBIfam" id="TIGR01066">
    <property type="entry name" value="rplM_bact"/>
    <property type="match status" value="1"/>
</dbReference>
<dbReference type="PANTHER" id="PTHR11545:SF2">
    <property type="entry name" value="LARGE RIBOSOMAL SUBUNIT PROTEIN UL13M"/>
    <property type="match status" value="1"/>
</dbReference>
<dbReference type="PANTHER" id="PTHR11545">
    <property type="entry name" value="RIBOSOMAL PROTEIN L13"/>
    <property type="match status" value="1"/>
</dbReference>
<dbReference type="Pfam" id="PF00572">
    <property type="entry name" value="Ribosomal_L13"/>
    <property type="match status" value="1"/>
</dbReference>
<dbReference type="PIRSF" id="PIRSF002181">
    <property type="entry name" value="Ribosomal_L13"/>
    <property type="match status" value="1"/>
</dbReference>
<dbReference type="SUPFAM" id="SSF52161">
    <property type="entry name" value="Ribosomal protein L13"/>
    <property type="match status" value="1"/>
</dbReference>
<dbReference type="PROSITE" id="PS00783">
    <property type="entry name" value="RIBOSOMAL_L13"/>
    <property type="match status" value="1"/>
</dbReference>
<proteinExistence type="inferred from homology"/>
<accession>A4FPH1</accession>
<keyword id="KW-1185">Reference proteome</keyword>
<keyword id="KW-0687">Ribonucleoprotein</keyword>
<keyword id="KW-0689">Ribosomal protein</keyword>
<protein>
    <recommendedName>
        <fullName evidence="1">Large ribosomal subunit protein uL13</fullName>
    </recommendedName>
    <alternativeName>
        <fullName evidence="3">50S ribosomal protein L13</fullName>
    </alternativeName>
</protein>